<reference key="1">
    <citation type="journal article" date="2002" name="Nucleic Acids Res.">
        <title>Genome sequence of Shigella flexneri 2a: insights into pathogenicity through comparison with genomes of Escherichia coli K12 and O157.</title>
        <authorList>
            <person name="Jin Q."/>
            <person name="Yuan Z."/>
            <person name="Xu J."/>
            <person name="Wang Y."/>
            <person name="Shen Y."/>
            <person name="Lu W."/>
            <person name="Wang J."/>
            <person name="Liu H."/>
            <person name="Yang J."/>
            <person name="Yang F."/>
            <person name="Zhang X."/>
            <person name="Zhang J."/>
            <person name="Yang G."/>
            <person name="Wu H."/>
            <person name="Qu D."/>
            <person name="Dong J."/>
            <person name="Sun L."/>
            <person name="Xue Y."/>
            <person name="Zhao A."/>
            <person name="Gao Y."/>
            <person name="Zhu J."/>
            <person name="Kan B."/>
            <person name="Ding K."/>
            <person name="Chen S."/>
            <person name="Cheng H."/>
            <person name="Yao Z."/>
            <person name="He B."/>
            <person name="Chen R."/>
            <person name="Ma D."/>
            <person name="Qiang B."/>
            <person name="Wen Y."/>
            <person name="Hou Y."/>
            <person name="Yu J."/>
        </authorList>
    </citation>
    <scope>NUCLEOTIDE SEQUENCE [LARGE SCALE GENOMIC DNA]</scope>
    <source>
        <strain>301 / Serotype 2a</strain>
    </source>
</reference>
<reference key="2">
    <citation type="journal article" date="2003" name="Infect. Immun.">
        <title>Complete genome sequence and comparative genomics of Shigella flexneri serotype 2a strain 2457T.</title>
        <authorList>
            <person name="Wei J."/>
            <person name="Goldberg M.B."/>
            <person name="Burland V."/>
            <person name="Venkatesan M.M."/>
            <person name="Deng W."/>
            <person name="Fournier G."/>
            <person name="Mayhew G.F."/>
            <person name="Plunkett G. III"/>
            <person name="Rose D.J."/>
            <person name="Darling A."/>
            <person name="Mau B."/>
            <person name="Perna N.T."/>
            <person name="Payne S.M."/>
            <person name="Runyen-Janecky L.J."/>
            <person name="Zhou S."/>
            <person name="Schwartz D.C."/>
            <person name="Blattner F.R."/>
        </authorList>
    </citation>
    <scope>NUCLEOTIDE SEQUENCE [LARGE SCALE GENOMIC DNA]</scope>
    <source>
        <strain>ATCC 700930 / 2457T / Serotype 2a</strain>
    </source>
</reference>
<accession>Q83L75</accession>
<gene>
    <name evidence="1" type="primary">yoaH</name>
    <name type="ordered locus">SF1417</name>
    <name type="ordered locus">S1532</name>
</gene>
<name>YOAH_SHIFL</name>
<proteinExistence type="inferred from homology"/>
<feature type="chain" id="PRO_0000216202" description="UPF0181 protein YoaH">
    <location>
        <begin position="1"/>
        <end position="59"/>
    </location>
</feature>
<organism>
    <name type="scientific">Shigella flexneri</name>
    <dbReference type="NCBI Taxonomy" id="623"/>
    <lineage>
        <taxon>Bacteria</taxon>
        <taxon>Pseudomonadati</taxon>
        <taxon>Pseudomonadota</taxon>
        <taxon>Gammaproteobacteria</taxon>
        <taxon>Enterobacterales</taxon>
        <taxon>Enterobacteriaceae</taxon>
        <taxon>Shigella</taxon>
    </lineage>
</organism>
<protein>
    <recommendedName>
        <fullName evidence="1">UPF0181 protein YoaH</fullName>
    </recommendedName>
</protein>
<dbReference type="EMBL" id="AE005674">
    <property type="protein sequence ID" value="AAN43018.1"/>
    <property type="molecule type" value="Genomic_DNA"/>
</dbReference>
<dbReference type="EMBL" id="AE014073">
    <property type="protein sequence ID" value="AAP16913.1"/>
    <property type="molecule type" value="Genomic_DNA"/>
</dbReference>
<dbReference type="RefSeq" id="NP_707311.1">
    <property type="nucleotide sequence ID" value="NC_004337.2"/>
</dbReference>
<dbReference type="RefSeq" id="WP_000457325.1">
    <property type="nucleotide sequence ID" value="NZ_WPGW01000062.1"/>
</dbReference>
<dbReference type="SMR" id="Q83L75"/>
<dbReference type="STRING" id="198214.SF1417"/>
<dbReference type="PaxDb" id="198214-SF1417"/>
<dbReference type="GeneID" id="1024601"/>
<dbReference type="KEGG" id="sfl:SF1417"/>
<dbReference type="KEGG" id="sfx:S1532"/>
<dbReference type="PATRIC" id="fig|198214.7.peg.1669"/>
<dbReference type="HOGENOM" id="CLU_185263_0_0_6"/>
<dbReference type="Proteomes" id="UP000001006">
    <property type="component" value="Chromosome"/>
</dbReference>
<dbReference type="Proteomes" id="UP000002673">
    <property type="component" value="Chromosome"/>
</dbReference>
<dbReference type="HAMAP" id="MF_00507">
    <property type="entry name" value="UPF0181"/>
    <property type="match status" value="1"/>
</dbReference>
<dbReference type="InterPro" id="IPR005371">
    <property type="entry name" value="UPF0181"/>
</dbReference>
<dbReference type="NCBIfam" id="NF003476">
    <property type="entry name" value="PRK05114.1"/>
    <property type="match status" value="1"/>
</dbReference>
<dbReference type="Pfam" id="PF03701">
    <property type="entry name" value="UPF0181"/>
    <property type="match status" value="1"/>
</dbReference>
<sequence length="59" mass="6523">MFAGLPSLIHEQQQKAVERIQELMAQGMSSGQAIALVAEELRANHSGELIVARFEDEDE</sequence>
<comment type="similarity">
    <text evidence="1">Belongs to the UPF0181 family.</text>
</comment>
<keyword id="KW-1185">Reference proteome</keyword>
<evidence type="ECO:0000255" key="1">
    <source>
        <dbReference type="HAMAP-Rule" id="MF_00507"/>
    </source>
</evidence>